<comment type="function">
    <text evidence="1">Acts as a chaperone.</text>
</comment>
<comment type="subcellular location">
    <subcellularLocation>
        <location>Plastid</location>
        <location>Chloroplast</location>
    </subcellularLocation>
</comment>
<comment type="similarity">
    <text evidence="2">Belongs to the heat shock protein 70 family.</text>
</comment>
<organism>
    <name type="scientific">Trieres chinensis</name>
    <name type="common">Marine centric diatom</name>
    <name type="synonym">Odontella sinensis</name>
    <dbReference type="NCBI Taxonomy" id="1514140"/>
    <lineage>
        <taxon>Eukaryota</taxon>
        <taxon>Sar</taxon>
        <taxon>Stramenopiles</taxon>
        <taxon>Ochrophyta</taxon>
        <taxon>Bacillariophyta</taxon>
        <taxon>Mediophyceae</taxon>
        <taxon>Biddulphiophycidae</taxon>
        <taxon>Eupodiscales</taxon>
        <taxon>Parodontellaceae</taxon>
        <taxon>Trieres</taxon>
    </lineage>
</organism>
<dbReference type="EMBL" id="Z67753">
    <property type="protein sequence ID" value="CAA91650.1"/>
    <property type="molecule type" value="Genomic_DNA"/>
</dbReference>
<dbReference type="PIR" id="S78277">
    <property type="entry name" value="S78277"/>
</dbReference>
<dbReference type="RefSeq" id="NP_043618.1">
    <property type="nucleotide sequence ID" value="NC_001713.1"/>
</dbReference>
<dbReference type="SMR" id="P49463"/>
<dbReference type="GeneID" id="801821"/>
<dbReference type="GO" id="GO:0009507">
    <property type="term" value="C:chloroplast"/>
    <property type="evidence" value="ECO:0007669"/>
    <property type="project" value="UniProtKB-SubCell"/>
</dbReference>
<dbReference type="GO" id="GO:0005524">
    <property type="term" value="F:ATP binding"/>
    <property type="evidence" value="ECO:0007669"/>
    <property type="project" value="UniProtKB-UniRule"/>
</dbReference>
<dbReference type="GO" id="GO:0140662">
    <property type="term" value="F:ATP-dependent protein folding chaperone"/>
    <property type="evidence" value="ECO:0007669"/>
    <property type="project" value="InterPro"/>
</dbReference>
<dbReference type="GO" id="GO:0051082">
    <property type="term" value="F:unfolded protein binding"/>
    <property type="evidence" value="ECO:0007669"/>
    <property type="project" value="InterPro"/>
</dbReference>
<dbReference type="CDD" id="cd10234">
    <property type="entry name" value="ASKHA_NBD_HSP70_DnaK-like"/>
    <property type="match status" value="1"/>
</dbReference>
<dbReference type="FunFam" id="2.60.34.10:FF:000014">
    <property type="entry name" value="Chaperone protein DnaK HSP70"/>
    <property type="match status" value="1"/>
</dbReference>
<dbReference type="FunFam" id="3.30.420.40:FF:000004">
    <property type="entry name" value="Molecular chaperone DnaK"/>
    <property type="match status" value="1"/>
</dbReference>
<dbReference type="FunFam" id="3.90.640.10:FF:000003">
    <property type="entry name" value="Molecular chaperone DnaK"/>
    <property type="match status" value="1"/>
</dbReference>
<dbReference type="Gene3D" id="3.30.420.40">
    <property type="match status" value="2"/>
</dbReference>
<dbReference type="Gene3D" id="3.90.640.10">
    <property type="entry name" value="Actin, Chain A, domain 4"/>
    <property type="match status" value="1"/>
</dbReference>
<dbReference type="Gene3D" id="2.60.34.10">
    <property type="entry name" value="Substrate Binding Domain Of DNAk, Chain A, domain 1"/>
    <property type="match status" value="1"/>
</dbReference>
<dbReference type="HAMAP" id="MF_00332">
    <property type="entry name" value="DnaK"/>
    <property type="match status" value="1"/>
</dbReference>
<dbReference type="InterPro" id="IPR043129">
    <property type="entry name" value="ATPase_NBD"/>
</dbReference>
<dbReference type="InterPro" id="IPR012725">
    <property type="entry name" value="Chaperone_DnaK"/>
</dbReference>
<dbReference type="InterPro" id="IPR018181">
    <property type="entry name" value="Heat_shock_70_CS"/>
</dbReference>
<dbReference type="InterPro" id="IPR029047">
    <property type="entry name" value="HSP70_peptide-bd_sf"/>
</dbReference>
<dbReference type="InterPro" id="IPR013126">
    <property type="entry name" value="Hsp_70_fam"/>
</dbReference>
<dbReference type="NCBIfam" id="NF001413">
    <property type="entry name" value="PRK00290.1"/>
    <property type="match status" value="1"/>
</dbReference>
<dbReference type="NCBIfam" id="NF003520">
    <property type="entry name" value="PRK05183.1"/>
    <property type="match status" value="1"/>
</dbReference>
<dbReference type="NCBIfam" id="TIGR02350">
    <property type="entry name" value="prok_dnaK"/>
    <property type="match status" value="1"/>
</dbReference>
<dbReference type="PANTHER" id="PTHR19375">
    <property type="entry name" value="HEAT SHOCK PROTEIN 70KDA"/>
    <property type="match status" value="1"/>
</dbReference>
<dbReference type="Pfam" id="PF00012">
    <property type="entry name" value="HSP70"/>
    <property type="match status" value="1"/>
</dbReference>
<dbReference type="PRINTS" id="PR00301">
    <property type="entry name" value="HEATSHOCK70"/>
</dbReference>
<dbReference type="SUPFAM" id="SSF53067">
    <property type="entry name" value="Actin-like ATPase domain"/>
    <property type="match status" value="2"/>
</dbReference>
<dbReference type="SUPFAM" id="SSF100920">
    <property type="entry name" value="Heat shock protein 70kD (HSP70), peptide-binding domain"/>
    <property type="match status" value="1"/>
</dbReference>
<dbReference type="PROSITE" id="PS00297">
    <property type="entry name" value="HSP70_1"/>
    <property type="match status" value="1"/>
</dbReference>
<dbReference type="PROSITE" id="PS00329">
    <property type="entry name" value="HSP70_2"/>
    <property type="match status" value="1"/>
</dbReference>
<keyword id="KW-0067">ATP-binding</keyword>
<keyword id="KW-0143">Chaperone</keyword>
<keyword id="KW-0150">Chloroplast</keyword>
<keyword id="KW-0547">Nucleotide-binding</keyword>
<keyword id="KW-0934">Plastid</keyword>
<keyword id="KW-0346">Stress response</keyword>
<protein>
    <recommendedName>
        <fullName>Chaperone protein dnaK</fullName>
    </recommendedName>
    <alternativeName>
        <fullName>HSP70</fullName>
    </alternativeName>
    <alternativeName>
        <fullName>Heat shock 70 kDa protein</fullName>
    </alternativeName>
    <alternativeName>
        <fullName>Heat shock protein 70</fullName>
    </alternativeName>
</protein>
<gene>
    <name type="primary">dnaK</name>
    <name type="synonym">hsp70</name>
</gene>
<accession>P49463</accession>
<reference key="1">
    <citation type="journal article" date="1995" name="Plant Mol. Biol. Rep.">
        <title>The chloroplast genome of a chlorophyll a+c-containing alga, Odontella sinensis.</title>
        <authorList>
            <person name="Kowallik K.V."/>
            <person name="Stoebe B."/>
            <person name="Schaffran I."/>
            <person name="Kroth-Pancic P."/>
            <person name="Freier U."/>
        </authorList>
    </citation>
    <scope>NUCLEOTIDE SEQUENCE [LARGE SCALE GENOMIC DNA]</scope>
</reference>
<proteinExistence type="inferred from homology"/>
<geneLocation type="chloroplast"/>
<sequence length="614" mass="67169">MGKVVGIDLGTTNSVVAAIEGGQPSVIVNAEGLRTTPSIVAYTKKQELLVGQIAKRQAVINPENTFFSVKRFIGSKELEISADSKKLPYKVVKDQNGNIKINCSSLNKEFSPEEISAQVLRKLINDATSYLGQDVTQAVITVPAYFNDSQRQATMDAGKIAGVEVLRIINEPTAASLAYGLDKKQNETILVFDLGGGTFDVSILEVGDGIFEVLATAGDTNLGGDDFDKVLVRWLVKEFEDQEGIDLTQDIQALQRLTEAAEKAKMELSTVEKTTIHLPFITADKTGPKHIEKELTRKTFETLCQELIERCQIPVEKALTDARLEKSDINEVVLVGGSTRIPAIQNLVESLTNKKPNQSVNPDEVVAIGAAIQAGILAGEIKDVLLLDVTPLSLGVETLGGVMTKIIARNTTIPVKKSEMFSTAVENQTNVEIHVLQGERELVAGNKSLGNFRLDGIPAAERGVPQIEVTFDINVDGLLSVKAKELETGIEQSVTIQGASNLDESEVSDMLAEAEKYAALNKEKRQNIDLKNQAETLCFEAEKELDLFKTSIPEEKQQNVQKLIENIRQDTQTDNFESLKLLVEELKMAMKDMVEAKPFVDQTDTDPMSNLNDL</sequence>
<name>DNAK_TRICV</name>
<feature type="chain" id="PRO_0000078609" description="Chaperone protein dnaK">
    <location>
        <begin position="1"/>
        <end position="614"/>
    </location>
</feature>
<evidence type="ECO:0000250" key="1"/>
<evidence type="ECO:0000305" key="2"/>